<feature type="chain" id="PRO_1000070803" description="Cytochrome c-type biogenesis protein CcmE">
    <location>
        <begin position="1"/>
        <end position="148"/>
    </location>
</feature>
<feature type="topological domain" description="Cytoplasmic" evidence="1">
    <location>
        <begin position="1"/>
        <end position="7"/>
    </location>
</feature>
<feature type="transmembrane region" description="Helical; Signal-anchor for type II membrane protein" evidence="1">
    <location>
        <begin position="8"/>
        <end position="28"/>
    </location>
</feature>
<feature type="topological domain" description="Periplasmic" evidence="1">
    <location>
        <begin position="29"/>
        <end position="148"/>
    </location>
</feature>
<feature type="binding site" description="covalent" evidence="1">
    <location>
        <position position="123"/>
    </location>
    <ligand>
        <name>heme</name>
        <dbReference type="ChEBI" id="CHEBI:30413"/>
    </ligand>
</feature>
<feature type="binding site" description="axial binding residue" evidence="1">
    <location>
        <position position="127"/>
    </location>
    <ligand>
        <name>heme</name>
        <dbReference type="ChEBI" id="CHEBI:30413"/>
    </ligand>
    <ligandPart>
        <name>Fe</name>
        <dbReference type="ChEBI" id="CHEBI:18248"/>
    </ligandPart>
</feature>
<proteinExistence type="inferred from homology"/>
<protein>
    <recommendedName>
        <fullName evidence="1">Cytochrome c-type biogenesis protein CcmE</fullName>
    </recommendedName>
    <alternativeName>
        <fullName evidence="1">Cytochrome c maturation protein E</fullName>
    </alternativeName>
    <alternativeName>
        <fullName evidence="1">Heme chaperone CcmE</fullName>
    </alternativeName>
</protein>
<name>CCME_AZOSB</name>
<accession>A1KCJ1</accession>
<comment type="function">
    <text evidence="1">Heme chaperone required for the biogenesis of c-type cytochromes. Transiently binds heme delivered by CcmC and transfers the heme to apo-cytochromes in a process facilitated by CcmF and CcmH.</text>
</comment>
<comment type="subcellular location">
    <subcellularLocation>
        <location evidence="1">Cell inner membrane</location>
        <topology evidence="1">Single-pass type II membrane protein</topology>
        <orientation evidence="1">Periplasmic side</orientation>
    </subcellularLocation>
</comment>
<comment type="similarity">
    <text evidence="1">Belongs to the CcmE/CycJ family.</text>
</comment>
<gene>
    <name evidence="1" type="primary">ccmE</name>
    <name evidence="1" type="synonym">cycJ</name>
    <name type="ordered locus">azo3931</name>
</gene>
<reference key="1">
    <citation type="journal article" date="2006" name="Nat. Biotechnol.">
        <title>Complete genome of the mutualistic, N2-fixing grass endophyte Azoarcus sp. strain BH72.</title>
        <authorList>
            <person name="Krause A."/>
            <person name="Ramakumar A."/>
            <person name="Bartels D."/>
            <person name="Battistoni F."/>
            <person name="Bekel T."/>
            <person name="Boch J."/>
            <person name="Boehm M."/>
            <person name="Friedrich F."/>
            <person name="Hurek T."/>
            <person name="Krause L."/>
            <person name="Linke B."/>
            <person name="McHardy A.C."/>
            <person name="Sarkar A."/>
            <person name="Schneiker S."/>
            <person name="Syed A.A."/>
            <person name="Thauer R."/>
            <person name="Vorhoelter F.-J."/>
            <person name="Weidner S."/>
            <person name="Puehler A."/>
            <person name="Reinhold-Hurek B."/>
            <person name="Kaiser O."/>
            <person name="Goesmann A."/>
        </authorList>
    </citation>
    <scope>NUCLEOTIDE SEQUENCE [LARGE SCALE GENOMIC DNA]</scope>
    <source>
        <strain>BH72</strain>
    </source>
</reference>
<sequence length="148" mass="15689">MKARNKRLMLVGGGIALLVAAAALVLSAFQQNLVFFHTPSEVAEGKAPVGKTFRVGGMVETGSIQRDADGVTVRFVITDTAKVIPVSYRGSLPDLFKEGKGAVVQGTLGADGQFRATEVLAKHDENYMPPEAAHALEQAHKTATTVQQ</sequence>
<dbReference type="EMBL" id="AM406670">
    <property type="protein sequence ID" value="CAL96547.1"/>
    <property type="molecule type" value="Genomic_DNA"/>
</dbReference>
<dbReference type="RefSeq" id="WP_011767653.1">
    <property type="nucleotide sequence ID" value="NC_008702.1"/>
</dbReference>
<dbReference type="SMR" id="A1KCJ1"/>
<dbReference type="STRING" id="62928.azo3931"/>
<dbReference type="KEGG" id="aoa:dqs_4075"/>
<dbReference type="KEGG" id="azo:azo3931"/>
<dbReference type="eggNOG" id="COG2332">
    <property type="taxonomic scope" value="Bacteria"/>
</dbReference>
<dbReference type="HOGENOM" id="CLU_079503_1_1_4"/>
<dbReference type="OrthoDB" id="9793584at2"/>
<dbReference type="Proteomes" id="UP000002588">
    <property type="component" value="Chromosome"/>
</dbReference>
<dbReference type="GO" id="GO:0005886">
    <property type="term" value="C:plasma membrane"/>
    <property type="evidence" value="ECO:0007669"/>
    <property type="project" value="UniProtKB-SubCell"/>
</dbReference>
<dbReference type="GO" id="GO:0020037">
    <property type="term" value="F:heme binding"/>
    <property type="evidence" value="ECO:0007669"/>
    <property type="project" value="InterPro"/>
</dbReference>
<dbReference type="GO" id="GO:0046872">
    <property type="term" value="F:metal ion binding"/>
    <property type="evidence" value="ECO:0007669"/>
    <property type="project" value="UniProtKB-KW"/>
</dbReference>
<dbReference type="GO" id="GO:0017004">
    <property type="term" value="P:cytochrome complex assembly"/>
    <property type="evidence" value="ECO:0007669"/>
    <property type="project" value="UniProtKB-KW"/>
</dbReference>
<dbReference type="FunFam" id="2.40.50.140:FF:000104">
    <property type="entry name" value="Cytochrome c-type biogenesis protein CcmE"/>
    <property type="match status" value="1"/>
</dbReference>
<dbReference type="Gene3D" id="2.40.50.140">
    <property type="entry name" value="Nucleic acid-binding proteins"/>
    <property type="match status" value="1"/>
</dbReference>
<dbReference type="HAMAP" id="MF_01959">
    <property type="entry name" value="CcmE"/>
    <property type="match status" value="1"/>
</dbReference>
<dbReference type="InterPro" id="IPR004329">
    <property type="entry name" value="CcmE"/>
</dbReference>
<dbReference type="InterPro" id="IPR036127">
    <property type="entry name" value="CcmE-like_sf"/>
</dbReference>
<dbReference type="InterPro" id="IPR012340">
    <property type="entry name" value="NA-bd_OB-fold"/>
</dbReference>
<dbReference type="NCBIfam" id="NF009727">
    <property type="entry name" value="PRK13254.1-1"/>
    <property type="match status" value="1"/>
</dbReference>
<dbReference type="NCBIfam" id="NF009729">
    <property type="entry name" value="PRK13254.1-3"/>
    <property type="match status" value="1"/>
</dbReference>
<dbReference type="NCBIfam" id="NF009731">
    <property type="entry name" value="PRK13254.1-5"/>
    <property type="match status" value="1"/>
</dbReference>
<dbReference type="PANTHER" id="PTHR34128">
    <property type="entry name" value="CYTOCHROME C-TYPE BIOGENESIS PROTEIN CCME HOMOLOG, MITOCHONDRIAL"/>
    <property type="match status" value="1"/>
</dbReference>
<dbReference type="PANTHER" id="PTHR34128:SF2">
    <property type="entry name" value="CYTOCHROME C-TYPE BIOGENESIS PROTEIN CCME HOMOLOG, MITOCHONDRIAL"/>
    <property type="match status" value="1"/>
</dbReference>
<dbReference type="Pfam" id="PF03100">
    <property type="entry name" value="CcmE"/>
    <property type="match status" value="1"/>
</dbReference>
<dbReference type="SUPFAM" id="SSF82093">
    <property type="entry name" value="Heme chaperone CcmE"/>
    <property type="match status" value="1"/>
</dbReference>
<organism>
    <name type="scientific">Azoarcus sp. (strain BH72)</name>
    <dbReference type="NCBI Taxonomy" id="418699"/>
    <lineage>
        <taxon>Bacteria</taxon>
        <taxon>Pseudomonadati</taxon>
        <taxon>Pseudomonadota</taxon>
        <taxon>Betaproteobacteria</taxon>
        <taxon>Rhodocyclales</taxon>
        <taxon>Zoogloeaceae</taxon>
        <taxon>Azoarcus</taxon>
    </lineage>
</organism>
<evidence type="ECO:0000255" key="1">
    <source>
        <dbReference type="HAMAP-Rule" id="MF_01959"/>
    </source>
</evidence>
<keyword id="KW-0997">Cell inner membrane</keyword>
<keyword id="KW-1003">Cell membrane</keyword>
<keyword id="KW-0201">Cytochrome c-type biogenesis</keyword>
<keyword id="KW-0349">Heme</keyword>
<keyword id="KW-0408">Iron</keyword>
<keyword id="KW-0472">Membrane</keyword>
<keyword id="KW-0479">Metal-binding</keyword>
<keyword id="KW-1185">Reference proteome</keyword>
<keyword id="KW-0735">Signal-anchor</keyword>
<keyword id="KW-0812">Transmembrane</keyword>
<keyword id="KW-1133">Transmembrane helix</keyword>